<dbReference type="EC" id="1.7.1.13" evidence="1"/>
<dbReference type="EMBL" id="BX936398">
    <property type="protein sequence ID" value="CAH22250.1"/>
    <property type="molecule type" value="Genomic_DNA"/>
</dbReference>
<dbReference type="RefSeq" id="WP_011192866.1">
    <property type="nucleotide sequence ID" value="NC_006155.1"/>
</dbReference>
<dbReference type="SMR" id="Q667I0"/>
<dbReference type="KEGG" id="ypo:BZ17_3608"/>
<dbReference type="KEGG" id="yps:YPTB3012"/>
<dbReference type="PATRIC" id="fig|273123.14.peg.3788"/>
<dbReference type="UniPathway" id="UPA00392"/>
<dbReference type="Proteomes" id="UP000001011">
    <property type="component" value="Chromosome"/>
</dbReference>
<dbReference type="GO" id="GO:0005737">
    <property type="term" value="C:cytoplasm"/>
    <property type="evidence" value="ECO:0007669"/>
    <property type="project" value="UniProtKB-SubCell"/>
</dbReference>
<dbReference type="GO" id="GO:0033739">
    <property type="term" value="F:preQ1 synthase activity"/>
    <property type="evidence" value="ECO:0007669"/>
    <property type="project" value="UniProtKB-UniRule"/>
</dbReference>
<dbReference type="GO" id="GO:0008616">
    <property type="term" value="P:queuosine biosynthetic process"/>
    <property type="evidence" value="ECO:0007669"/>
    <property type="project" value="UniProtKB-UniRule"/>
</dbReference>
<dbReference type="GO" id="GO:0006400">
    <property type="term" value="P:tRNA modification"/>
    <property type="evidence" value="ECO:0007669"/>
    <property type="project" value="UniProtKB-UniRule"/>
</dbReference>
<dbReference type="Gene3D" id="3.30.1130.10">
    <property type="match status" value="2"/>
</dbReference>
<dbReference type="HAMAP" id="MF_00817">
    <property type="entry name" value="QueF_type2"/>
    <property type="match status" value="1"/>
</dbReference>
<dbReference type="InterPro" id="IPR043133">
    <property type="entry name" value="GTP-CH-I_C/QueF"/>
</dbReference>
<dbReference type="InterPro" id="IPR050084">
    <property type="entry name" value="NADPH_dep_7-cyano-7-deazaG_red"/>
</dbReference>
<dbReference type="InterPro" id="IPR029500">
    <property type="entry name" value="QueF"/>
</dbReference>
<dbReference type="InterPro" id="IPR029139">
    <property type="entry name" value="QueF_N"/>
</dbReference>
<dbReference type="InterPro" id="IPR016428">
    <property type="entry name" value="QueF_type2"/>
</dbReference>
<dbReference type="NCBIfam" id="TIGR03138">
    <property type="entry name" value="QueF"/>
    <property type="match status" value="1"/>
</dbReference>
<dbReference type="PANTHER" id="PTHR34354">
    <property type="entry name" value="NADPH-DEPENDENT 7-CYANO-7-DEAZAGUANINE REDUCTASE"/>
    <property type="match status" value="1"/>
</dbReference>
<dbReference type="PANTHER" id="PTHR34354:SF1">
    <property type="entry name" value="NADPH-DEPENDENT 7-CYANO-7-DEAZAGUANINE REDUCTASE"/>
    <property type="match status" value="1"/>
</dbReference>
<dbReference type="Pfam" id="PF14489">
    <property type="entry name" value="QueF"/>
    <property type="match status" value="1"/>
</dbReference>
<dbReference type="Pfam" id="PF14819">
    <property type="entry name" value="QueF_N"/>
    <property type="match status" value="1"/>
</dbReference>
<dbReference type="PIRSF" id="PIRSF004750">
    <property type="entry name" value="Nitrile_oxidored_YqcD_prd"/>
    <property type="match status" value="1"/>
</dbReference>
<dbReference type="SUPFAM" id="SSF55620">
    <property type="entry name" value="Tetrahydrobiopterin biosynthesis enzymes-like"/>
    <property type="match status" value="1"/>
</dbReference>
<accession>Q667I0</accession>
<keyword id="KW-0963">Cytoplasm</keyword>
<keyword id="KW-0521">NADP</keyword>
<keyword id="KW-0560">Oxidoreductase</keyword>
<keyword id="KW-0671">Queuosine biosynthesis</keyword>
<gene>
    <name evidence="1" type="primary">queF</name>
    <name type="ordered locus">YPTB3012</name>
</gene>
<protein>
    <recommendedName>
        <fullName evidence="1">NADPH-dependent 7-cyano-7-deazaguanine reductase</fullName>
        <ecNumber evidence="1">1.7.1.13</ecNumber>
    </recommendedName>
    <alternativeName>
        <fullName evidence="1">7-cyano-7-carbaguanine reductase</fullName>
    </alternativeName>
    <alternativeName>
        <fullName evidence="1">NADPH-dependent nitrile oxidoreductase</fullName>
    </alternativeName>
    <alternativeName>
        <fullName evidence="1">PreQ(0) reductase</fullName>
    </alternativeName>
</protein>
<comment type="function">
    <text evidence="1">Catalyzes the NADPH-dependent reduction of 7-cyano-7-deazaguanine (preQ0) to 7-aminomethyl-7-deazaguanine (preQ1).</text>
</comment>
<comment type="catalytic activity">
    <reaction evidence="1">
        <text>7-aminomethyl-7-carbaguanine + 2 NADP(+) = 7-cyano-7-deazaguanine + 2 NADPH + 3 H(+)</text>
        <dbReference type="Rhea" id="RHEA:13409"/>
        <dbReference type="ChEBI" id="CHEBI:15378"/>
        <dbReference type="ChEBI" id="CHEBI:45075"/>
        <dbReference type="ChEBI" id="CHEBI:57783"/>
        <dbReference type="ChEBI" id="CHEBI:58349"/>
        <dbReference type="ChEBI" id="CHEBI:58703"/>
        <dbReference type="EC" id="1.7.1.13"/>
    </reaction>
</comment>
<comment type="pathway">
    <text evidence="1">tRNA modification; tRNA-queuosine biosynthesis.</text>
</comment>
<comment type="subunit">
    <text evidence="1">Homodimer.</text>
</comment>
<comment type="subcellular location">
    <subcellularLocation>
        <location evidence="1">Cytoplasm</location>
    </subcellularLocation>
</comment>
<comment type="similarity">
    <text evidence="1">Belongs to the GTP cyclohydrolase I family. QueF type 2 subfamily.</text>
</comment>
<evidence type="ECO:0000255" key="1">
    <source>
        <dbReference type="HAMAP-Rule" id="MF_00817"/>
    </source>
</evidence>
<name>QUEF_YERPS</name>
<sequence>MSSYQNHKALAELTLGKPTAYCDHYDATLLQAVPRSMNREPLGLYPDNLPFHGADIWTLYELSWLNSNGLPQVAVGEISLNADSINLIESKSFKLYLNSFNQTIFADKESVRMTLQRDLAACAQGNVSVALYDLDEITGQPISNFNGECLDKQDIRIDSYEFNADYLQGAAGKDHVEESLVSHLLKSNCLITHQPDWGSVQIHYRGPQIDHEALLRYLVSFRHHNEFHEQCVERIFNDIMRFCQPETLTVYARYTRRGGLDINPWRSNTDFVPLTGRLARQ</sequence>
<proteinExistence type="inferred from homology"/>
<reference key="1">
    <citation type="journal article" date="2004" name="Proc. Natl. Acad. Sci. U.S.A.">
        <title>Insights into the evolution of Yersinia pestis through whole-genome comparison with Yersinia pseudotuberculosis.</title>
        <authorList>
            <person name="Chain P.S.G."/>
            <person name="Carniel E."/>
            <person name="Larimer F.W."/>
            <person name="Lamerdin J."/>
            <person name="Stoutland P.O."/>
            <person name="Regala W.M."/>
            <person name="Georgescu A.M."/>
            <person name="Vergez L.M."/>
            <person name="Land M.L."/>
            <person name="Motin V.L."/>
            <person name="Brubaker R.R."/>
            <person name="Fowler J."/>
            <person name="Hinnebusch J."/>
            <person name="Marceau M."/>
            <person name="Medigue C."/>
            <person name="Simonet M."/>
            <person name="Chenal-Francisque V."/>
            <person name="Souza B."/>
            <person name="Dacheux D."/>
            <person name="Elliott J.M."/>
            <person name="Derbise A."/>
            <person name="Hauser L.J."/>
            <person name="Garcia E."/>
        </authorList>
    </citation>
    <scope>NUCLEOTIDE SEQUENCE [LARGE SCALE GENOMIC DNA]</scope>
    <source>
        <strain>IP32953</strain>
    </source>
</reference>
<feature type="chain" id="PRO_0000163074" description="NADPH-dependent 7-cyano-7-deazaguanine reductase">
    <location>
        <begin position="1"/>
        <end position="281"/>
    </location>
</feature>
<feature type="active site" description="Thioimide intermediate" evidence="1">
    <location>
        <position position="189"/>
    </location>
</feature>
<feature type="active site" description="Proton donor" evidence="1">
    <location>
        <position position="196"/>
    </location>
</feature>
<feature type="binding site" evidence="1">
    <location>
        <begin position="88"/>
        <end position="90"/>
    </location>
    <ligand>
        <name>substrate</name>
    </ligand>
</feature>
<feature type="binding site" evidence="1">
    <location>
        <begin position="90"/>
        <end position="91"/>
    </location>
    <ligand>
        <name>NADPH</name>
        <dbReference type="ChEBI" id="CHEBI:57783"/>
    </ligand>
</feature>
<feature type="binding site" evidence="1">
    <location>
        <begin position="228"/>
        <end position="229"/>
    </location>
    <ligand>
        <name>substrate</name>
    </ligand>
</feature>
<feature type="binding site" evidence="1">
    <location>
        <begin position="257"/>
        <end position="258"/>
    </location>
    <ligand>
        <name>NADPH</name>
        <dbReference type="ChEBI" id="CHEBI:57783"/>
    </ligand>
</feature>
<organism>
    <name type="scientific">Yersinia pseudotuberculosis serotype I (strain IP32953)</name>
    <dbReference type="NCBI Taxonomy" id="273123"/>
    <lineage>
        <taxon>Bacteria</taxon>
        <taxon>Pseudomonadati</taxon>
        <taxon>Pseudomonadota</taxon>
        <taxon>Gammaproteobacteria</taxon>
        <taxon>Enterobacterales</taxon>
        <taxon>Yersiniaceae</taxon>
        <taxon>Yersinia</taxon>
    </lineage>
</organism>